<accession>A6QJD0</accession>
<keyword id="KW-0963">Cytoplasm</keyword>
<keyword id="KW-0378">Hydrolase</keyword>
<keyword id="KW-0479">Metal-binding</keyword>
<keyword id="KW-0533">Nickel</keyword>
<dbReference type="EC" id="3.5.1.5" evidence="1"/>
<dbReference type="EMBL" id="AP009351">
    <property type="protein sequence ID" value="BAF68462.1"/>
    <property type="molecule type" value="Genomic_DNA"/>
</dbReference>
<dbReference type="RefSeq" id="WP_000008673.1">
    <property type="nucleotide sequence ID" value="NZ_JBBIAE010000006.1"/>
</dbReference>
<dbReference type="SMR" id="A6QJD0"/>
<dbReference type="MEROPS" id="M38.982"/>
<dbReference type="KEGG" id="sae:NWMN_2190"/>
<dbReference type="HOGENOM" id="CLU_000980_0_0_9"/>
<dbReference type="UniPathway" id="UPA00258">
    <property type="reaction ID" value="UER00370"/>
</dbReference>
<dbReference type="Proteomes" id="UP000006386">
    <property type="component" value="Chromosome"/>
</dbReference>
<dbReference type="GO" id="GO:0005737">
    <property type="term" value="C:cytoplasm"/>
    <property type="evidence" value="ECO:0007669"/>
    <property type="project" value="UniProtKB-SubCell"/>
</dbReference>
<dbReference type="GO" id="GO:0016151">
    <property type="term" value="F:nickel cation binding"/>
    <property type="evidence" value="ECO:0007669"/>
    <property type="project" value="UniProtKB-UniRule"/>
</dbReference>
<dbReference type="GO" id="GO:0009039">
    <property type="term" value="F:urease activity"/>
    <property type="evidence" value="ECO:0007669"/>
    <property type="project" value="UniProtKB-UniRule"/>
</dbReference>
<dbReference type="GO" id="GO:0043419">
    <property type="term" value="P:urea catabolic process"/>
    <property type="evidence" value="ECO:0007669"/>
    <property type="project" value="UniProtKB-UniRule"/>
</dbReference>
<dbReference type="CDD" id="cd00375">
    <property type="entry name" value="Urease_alpha"/>
    <property type="match status" value="1"/>
</dbReference>
<dbReference type="Gene3D" id="3.20.20.140">
    <property type="entry name" value="Metal-dependent hydrolases"/>
    <property type="match status" value="1"/>
</dbReference>
<dbReference type="Gene3D" id="2.30.40.10">
    <property type="entry name" value="Urease, subunit C, domain 1"/>
    <property type="match status" value="1"/>
</dbReference>
<dbReference type="HAMAP" id="MF_01953">
    <property type="entry name" value="Urease_alpha"/>
    <property type="match status" value="1"/>
</dbReference>
<dbReference type="InterPro" id="IPR006680">
    <property type="entry name" value="Amidohydro-rel"/>
</dbReference>
<dbReference type="InterPro" id="IPR011059">
    <property type="entry name" value="Metal-dep_hydrolase_composite"/>
</dbReference>
<dbReference type="InterPro" id="IPR032466">
    <property type="entry name" value="Metal_Hydrolase"/>
</dbReference>
<dbReference type="InterPro" id="IPR011612">
    <property type="entry name" value="Urease_alpha_N_dom"/>
</dbReference>
<dbReference type="InterPro" id="IPR050112">
    <property type="entry name" value="Urease_alpha_subunit"/>
</dbReference>
<dbReference type="InterPro" id="IPR017950">
    <property type="entry name" value="Urease_AS"/>
</dbReference>
<dbReference type="InterPro" id="IPR005848">
    <property type="entry name" value="Urease_asu"/>
</dbReference>
<dbReference type="InterPro" id="IPR017951">
    <property type="entry name" value="Urease_asu_c"/>
</dbReference>
<dbReference type="InterPro" id="IPR029754">
    <property type="entry name" value="Urease_Ni-bd"/>
</dbReference>
<dbReference type="NCBIfam" id="NF009686">
    <property type="entry name" value="PRK13207.1"/>
    <property type="match status" value="1"/>
</dbReference>
<dbReference type="NCBIfam" id="TIGR01792">
    <property type="entry name" value="urease_alph"/>
    <property type="match status" value="1"/>
</dbReference>
<dbReference type="PANTHER" id="PTHR43440">
    <property type="entry name" value="UREASE"/>
    <property type="match status" value="1"/>
</dbReference>
<dbReference type="PANTHER" id="PTHR43440:SF1">
    <property type="entry name" value="UREASE"/>
    <property type="match status" value="1"/>
</dbReference>
<dbReference type="Pfam" id="PF01979">
    <property type="entry name" value="Amidohydro_1"/>
    <property type="match status" value="1"/>
</dbReference>
<dbReference type="Pfam" id="PF00449">
    <property type="entry name" value="Urease_alpha"/>
    <property type="match status" value="1"/>
</dbReference>
<dbReference type="PRINTS" id="PR01752">
    <property type="entry name" value="UREASE"/>
</dbReference>
<dbReference type="SUPFAM" id="SSF51338">
    <property type="entry name" value="Composite domain of metallo-dependent hydrolases"/>
    <property type="match status" value="1"/>
</dbReference>
<dbReference type="SUPFAM" id="SSF51556">
    <property type="entry name" value="Metallo-dependent hydrolases"/>
    <property type="match status" value="1"/>
</dbReference>
<dbReference type="PROSITE" id="PS01120">
    <property type="entry name" value="UREASE_1"/>
    <property type="match status" value="1"/>
</dbReference>
<dbReference type="PROSITE" id="PS00145">
    <property type="entry name" value="UREASE_2"/>
    <property type="match status" value="1"/>
</dbReference>
<dbReference type="PROSITE" id="PS51368">
    <property type="entry name" value="UREASE_3"/>
    <property type="match status" value="1"/>
</dbReference>
<feature type="chain" id="PRO_1000073702" description="Urease subunit alpha">
    <location>
        <begin position="1"/>
        <end position="571"/>
    </location>
</feature>
<feature type="domain" description="Urease" evidence="1">
    <location>
        <begin position="133"/>
        <end position="571"/>
    </location>
</feature>
<feature type="active site" description="Proton donor" evidence="1">
    <location>
        <position position="324"/>
    </location>
</feature>
<feature type="binding site" evidence="1">
    <location>
        <position position="138"/>
    </location>
    <ligand>
        <name>Ni(2+)</name>
        <dbReference type="ChEBI" id="CHEBI:49786"/>
        <label>1</label>
    </ligand>
</feature>
<feature type="binding site" evidence="1">
    <location>
        <position position="140"/>
    </location>
    <ligand>
        <name>Ni(2+)</name>
        <dbReference type="ChEBI" id="CHEBI:49786"/>
        <label>1</label>
    </ligand>
</feature>
<feature type="binding site" description="via carbamate group" evidence="1">
    <location>
        <position position="221"/>
    </location>
    <ligand>
        <name>Ni(2+)</name>
        <dbReference type="ChEBI" id="CHEBI:49786"/>
        <label>1</label>
    </ligand>
</feature>
<feature type="binding site" description="via carbamate group" evidence="1">
    <location>
        <position position="221"/>
    </location>
    <ligand>
        <name>Ni(2+)</name>
        <dbReference type="ChEBI" id="CHEBI:49786"/>
        <label>2</label>
    </ligand>
</feature>
<feature type="binding site" evidence="1">
    <location>
        <position position="223"/>
    </location>
    <ligand>
        <name>substrate</name>
    </ligand>
</feature>
<feature type="binding site" evidence="1">
    <location>
        <position position="250"/>
    </location>
    <ligand>
        <name>Ni(2+)</name>
        <dbReference type="ChEBI" id="CHEBI:49786"/>
        <label>2</label>
    </ligand>
</feature>
<feature type="binding site" evidence="1">
    <location>
        <position position="276"/>
    </location>
    <ligand>
        <name>Ni(2+)</name>
        <dbReference type="ChEBI" id="CHEBI:49786"/>
        <label>2</label>
    </ligand>
</feature>
<feature type="binding site" evidence="1">
    <location>
        <position position="364"/>
    </location>
    <ligand>
        <name>Ni(2+)</name>
        <dbReference type="ChEBI" id="CHEBI:49786"/>
        <label>1</label>
    </ligand>
</feature>
<feature type="modified residue" description="N6-carboxylysine" evidence="1">
    <location>
        <position position="221"/>
    </location>
</feature>
<protein>
    <recommendedName>
        <fullName evidence="1">Urease subunit alpha</fullName>
        <ecNumber evidence="1">3.5.1.5</ecNumber>
    </recommendedName>
    <alternativeName>
        <fullName evidence="1">Urea amidohydrolase subunit alpha</fullName>
    </alternativeName>
</protein>
<gene>
    <name evidence="1" type="primary">ureC</name>
    <name type="ordered locus">NWMN_2190</name>
</gene>
<proteinExistence type="inferred from homology"/>
<name>URE1_STAAE</name>
<sequence>MSFKMTQNQYTSLYGPTVGDSIRLGDTNLFAQIEKDYAVYGEEATFGGGKSIRDGMAQNPRVTRDDVNVADLVISNAVIIDYDKVVKADIGIKNGYIFAIGNAGNPDIMDNVDIIIGSTTDIIAAEGKIVTAGGIDTHVHFINPEQAEVALESGITTHIGGGTGASEGSKATTVTPGPWHIHRMLEAAEGLPINVGFTGKGQATNPTALIEQINAGAIGLKVHEDWGATPSALSHALDVADEFDVQIALHADTLNEAGFMEDTMAAVKDRVLHMYHTEGAGGGHAPDLIKSAAFSNILPSSTNPTLPYTHNTVDEHLDMVMITHHLNAAIPEDIAFADSRIRKETIAAEDVLQDMGVFSMISSDSQAMGRVGEVITRTWQVAHRMKEQRGPLDGDFEHNDNNRIKRYIAKYTINPAITHGISEYVGSIEPGKLADIVLWDPIFFGVKPELVVKGGLINSAVNGDANGSIPTSEPMKYRKMYGQYGGNLTSTSMTFVSKTAYENGINRALNLKRMVRPVKNIRQLSKADMKNNSATPKLDVDPQTYEVYVDGEKITSNAATELPLTQRYFLF</sequence>
<evidence type="ECO:0000255" key="1">
    <source>
        <dbReference type="HAMAP-Rule" id="MF_01953"/>
    </source>
</evidence>
<organism>
    <name type="scientific">Staphylococcus aureus (strain Newman)</name>
    <dbReference type="NCBI Taxonomy" id="426430"/>
    <lineage>
        <taxon>Bacteria</taxon>
        <taxon>Bacillati</taxon>
        <taxon>Bacillota</taxon>
        <taxon>Bacilli</taxon>
        <taxon>Bacillales</taxon>
        <taxon>Staphylococcaceae</taxon>
        <taxon>Staphylococcus</taxon>
    </lineage>
</organism>
<comment type="catalytic activity">
    <reaction evidence="1">
        <text>urea + 2 H2O + H(+) = hydrogencarbonate + 2 NH4(+)</text>
        <dbReference type="Rhea" id="RHEA:20557"/>
        <dbReference type="ChEBI" id="CHEBI:15377"/>
        <dbReference type="ChEBI" id="CHEBI:15378"/>
        <dbReference type="ChEBI" id="CHEBI:16199"/>
        <dbReference type="ChEBI" id="CHEBI:17544"/>
        <dbReference type="ChEBI" id="CHEBI:28938"/>
        <dbReference type="EC" id="3.5.1.5"/>
    </reaction>
</comment>
<comment type="cofactor">
    <cofactor evidence="1">
        <name>Ni cation</name>
        <dbReference type="ChEBI" id="CHEBI:25516"/>
    </cofactor>
    <text evidence="1">Binds 2 nickel ions per subunit.</text>
</comment>
<comment type="pathway">
    <text evidence="1">Nitrogen metabolism; urea degradation; CO(2) and NH(3) from urea (urease route): step 1/1.</text>
</comment>
<comment type="subunit">
    <text evidence="1">Heterotrimer of UreA (gamma), UreB (beta) and UreC (alpha) subunits. Three heterotrimers associate to form the active enzyme.</text>
</comment>
<comment type="subcellular location">
    <subcellularLocation>
        <location evidence="1">Cytoplasm</location>
    </subcellularLocation>
</comment>
<comment type="PTM">
    <text evidence="1">Carboxylation allows a single lysine to coordinate two nickel ions.</text>
</comment>
<comment type="similarity">
    <text evidence="1">Belongs to the metallo-dependent hydrolases superfamily. Urease alpha subunit family.</text>
</comment>
<reference key="1">
    <citation type="journal article" date="2008" name="J. Bacteriol.">
        <title>Genome sequence of Staphylococcus aureus strain Newman and comparative analysis of staphylococcal genomes: polymorphism and evolution of two major pathogenicity islands.</title>
        <authorList>
            <person name="Baba T."/>
            <person name="Bae T."/>
            <person name="Schneewind O."/>
            <person name="Takeuchi F."/>
            <person name="Hiramatsu K."/>
        </authorList>
    </citation>
    <scope>NUCLEOTIDE SEQUENCE [LARGE SCALE GENOMIC DNA]</scope>
    <source>
        <strain>Newman</strain>
    </source>
</reference>